<name>RL33_DINSH</name>
<reference key="1">
    <citation type="journal article" date="2010" name="ISME J.">
        <title>The complete genome sequence of the algal symbiont Dinoroseobacter shibae: a hitchhiker's guide to life in the sea.</title>
        <authorList>
            <person name="Wagner-Dobler I."/>
            <person name="Ballhausen B."/>
            <person name="Berger M."/>
            <person name="Brinkhoff T."/>
            <person name="Buchholz I."/>
            <person name="Bunk B."/>
            <person name="Cypionka H."/>
            <person name="Daniel R."/>
            <person name="Drepper T."/>
            <person name="Gerdts G."/>
            <person name="Hahnke S."/>
            <person name="Han C."/>
            <person name="Jahn D."/>
            <person name="Kalhoefer D."/>
            <person name="Kiss H."/>
            <person name="Klenk H.P."/>
            <person name="Kyrpides N."/>
            <person name="Liebl W."/>
            <person name="Liesegang H."/>
            <person name="Meincke L."/>
            <person name="Pati A."/>
            <person name="Petersen J."/>
            <person name="Piekarski T."/>
            <person name="Pommerenke C."/>
            <person name="Pradella S."/>
            <person name="Pukall R."/>
            <person name="Rabus R."/>
            <person name="Stackebrandt E."/>
            <person name="Thole S."/>
            <person name="Thompson L."/>
            <person name="Tielen P."/>
            <person name="Tomasch J."/>
            <person name="von Jan M."/>
            <person name="Wanphrut N."/>
            <person name="Wichels A."/>
            <person name="Zech H."/>
            <person name="Simon M."/>
        </authorList>
    </citation>
    <scope>NUCLEOTIDE SEQUENCE [LARGE SCALE GENOMIC DNA]</scope>
    <source>
        <strain>DSM 16493 / NCIMB 14021 / DFL 12</strain>
    </source>
</reference>
<proteinExistence type="inferred from homology"/>
<feature type="chain" id="PRO_0000356452" description="Large ribosomal subunit protein bL33">
    <location>
        <begin position="1"/>
        <end position="55"/>
    </location>
</feature>
<gene>
    <name evidence="1" type="primary">rpmG</name>
    <name type="ordered locus">Dshi_2781</name>
</gene>
<comment type="similarity">
    <text evidence="1">Belongs to the bacterial ribosomal protein bL33 family.</text>
</comment>
<dbReference type="EMBL" id="CP000830">
    <property type="protein sequence ID" value="ABV94514.1"/>
    <property type="molecule type" value="Genomic_DNA"/>
</dbReference>
<dbReference type="RefSeq" id="WP_012179442.1">
    <property type="nucleotide sequence ID" value="NC_009952.1"/>
</dbReference>
<dbReference type="SMR" id="A8LJ19"/>
<dbReference type="STRING" id="398580.Dshi_2781"/>
<dbReference type="GeneID" id="75102027"/>
<dbReference type="KEGG" id="dsh:Dshi_2781"/>
<dbReference type="eggNOG" id="COG0267">
    <property type="taxonomic scope" value="Bacteria"/>
</dbReference>
<dbReference type="HOGENOM" id="CLU_190949_1_1_5"/>
<dbReference type="OrthoDB" id="21586at2"/>
<dbReference type="Proteomes" id="UP000006833">
    <property type="component" value="Chromosome"/>
</dbReference>
<dbReference type="GO" id="GO:0022625">
    <property type="term" value="C:cytosolic large ribosomal subunit"/>
    <property type="evidence" value="ECO:0007669"/>
    <property type="project" value="TreeGrafter"/>
</dbReference>
<dbReference type="GO" id="GO:0003735">
    <property type="term" value="F:structural constituent of ribosome"/>
    <property type="evidence" value="ECO:0007669"/>
    <property type="project" value="InterPro"/>
</dbReference>
<dbReference type="GO" id="GO:0006412">
    <property type="term" value="P:translation"/>
    <property type="evidence" value="ECO:0007669"/>
    <property type="project" value="UniProtKB-UniRule"/>
</dbReference>
<dbReference type="Gene3D" id="2.20.28.120">
    <property type="entry name" value="Ribosomal protein L33"/>
    <property type="match status" value="1"/>
</dbReference>
<dbReference type="HAMAP" id="MF_00294">
    <property type="entry name" value="Ribosomal_bL33"/>
    <property type="match status" value="1"/>
</dbReference>
<dbReference type="InterPro" id="IPR001705">
    <property type="entry name" value="Ribosomal_bL33"/>
</dbReference>
<dbReference type="InterPro" id="IPR018264">
    <property type="entry name" value="Ribosomal_bL33_CS"/>
</dbReference>
<dbReference type="InterPro" id="IPR038584">
    <property type="entry name" value="Ribosomal_bL33_sf"/>
</dbReference>
<dbReference type="InterPro" id="IPR011332">
    <property type="entry name" value="Ribosomal_zn-bd"/>
</dbReference>
<dbReference type="NCBIfam" id="NF001860">
    <property type="entry name" value="PRK00595.1"/>
    <property type="match status" value="1"/>
</dbReference>
<dbReference type="NCBIfam" id="TIGR01023">
    <property type="entry name" value="rpmG_bact"/>
    <property type="match status" value="1"/>
</dbReference>
<dbReference type="PANTHER" id="PTHR15238">
    <property type="entry name" value="54S RIBOSOMAL PROTEIN L39, MITOCHONDRIAL"/>
    <property type="match status" value="1"/>
</dbReference>
<dbReference type="PANTHER" id="PTHR15238:SF1">
    <property type="entry name" value="LARGE RIBOSOMAL SUBUNIT PROTEIN BL33M"/>
    <property type="match status" value="1"/>
</dbReference>
<dbReference type="Pfam" id="PF00471">
    <property type="entry name" value="Ribosomal_L33"/>
    <property type="match status" value="1"/>
</dbReference>
<dbReference type="SUPFAM" id="SSF57829">
    <property type="entry name" value="Zn-binding ribosomal proteins"/>
    <property type="match status" value="1"/>
</dbReference>
<dbReference type="PROSITE" id="PS00582">
    <property type="entry name" value="RIBOSOMAL_L33"/>
    <property type="match status" value="1"/>
</dbReference>
<accession>A8LJ19</accession>
<organism>
    <name type="scientific">Dinoroseobacter shibae (strain DSM 16493 / NCIMB 14021 / DFL 12)</name>
    <dbReference type="NCBI Taxonomy" id="398580"/>
    <lineage>
        <taxon>Bacteria</taxon>
        <taxon>Pseudomonadati</taxon>
        <taxon>Pseudomonadota</taxon>
        <taxon>Alphaproteobacteria</taxon>
        <taxon>Rhodobacterales</taxon>
        <taxon>Roseobacteraceae</taxon>
        <taxon>Dinoroseobacter</taxon>
    </lineage>
</organism>
<keyword id="KW-1185">Reference proteome</keyword>
<keyword id="KW-0687">Ribonucleoprotein</keyword>
<keyword id="KW-0689">Ribosomal protein</keyword>
<evidence type="ECO:0000255" key="1">
    <source>
        <dbReference type="HAMAP-Rule" id="MF_00294"/>
    </source>
</evidence>
<evidence type="ECO:0000305" key="2"/>
<protein>
    <recommendedName>
        <fullName evidence="1">Large ribosomal subunit protein bL33</fullName>
    </recommendedName>
    <alternativeName>
        <fullName evidence="2">50S ribosomal protein L33</fullName>
    </alternativeName>
</protein>
<sequence>MAKPTTIKIRLNSTADTGHFYVTKKNARTMTEKMVVRKYDPVARKHVEYKEGKIK</sequence>